<organism>
    <name type="scientific">Rhizobium etli (strain ATCC 51251 / DSM 11541 / JCM 21823 / NBRC 15573 / CFN 42)</name>
    <dbReference type="NCBI Taxonomy" id="347834"/>
    <lineage>
        <taxon>Bacteria</taxon>
        <taxon>Pseudomonadati</taxon>
        <taxon>Pseudomonadota</taxon>
        <taxon>Alphaproteobacteria</taxon>
        <taxon>Hyphomicrobiales</taxon>
        <taxon>Rhizobiaceae</taxon>
        <taxon>Rhizobium/Agrobacterium group</taxon>
        <taxon>Rhizobium</taxon>
    </lineage>
</organism>
<protein>
    <recommendedName>
        <fullName evidence="1">Ribosome maturation factor RimP</fullName>
    </recommendedName>
</protein>
<dbReference type="EMBL" id="CP000133">
    <property type="protein sequence ID" value="ABC88944.1"/>
    <property type="molecule type" value="Genomic_DNA"/>
</dbReference>
<dbReference type="SMR" id="Q2KDZ2"/>
<dbReference type="KEGG" id="ret:RHE_CH00119"/>
<dbReference type="eggNOG" id="COG0779">
    <property type="taxonomic scope" value="Bacteria"/>
</dbReference>
<dbReference type="HOGENOM" id="CLU_070525_0_1_5"/>
<dbReference type="Proteomes" id="UP000001936">
    <property type="component" value="Chromosome"/>
</dbReference>
<dbReference type="GO" id="GO:0005829">
    <property type="term" value="C:cytosol"/>
    <property type="evidence" value="ECO:0007669"/>
    <property type="project" value="TreeGrafter"/>
</dbReference>
<dbReference type="GO" id="GO:0000028">
    <property type="term" value="P:ribosomal small subunit assembly"/>
    <property type="evidence" value="ECO:0007669"/>
    <property type="project" value="TreeGrafter"/>
</dbReference>
<dbReference type="GO" id="GO:0006412">
    <property type="term" value="P:translation"/>
    <property type="evidence" value="ECO:0007669"/>
    <property type="project" value="TreeGrafter"/>
</dbReference>
<dbReference type="CDD" id="cd01734">
    <property type="entry name" value="YlxS_C"/>
    <property type="match status" value="1"/>
</dbReference>
<dbReference type="Gene3D" id="2.30.30.180">
    <property type="entry name" value="Ribosome maturation factor RimP, C-terminal domain"/>
    <property type="match status" value="1"/>
</dbReference>
<dbReference type="Gene3D" id="3.30.300.70">
    <property type="entry name" value="RimP-like superfamily, N-terminal"/>
    <property type="match status" value="1"/>
</dbReference>
<dbReference type="HAMAP" id="MF_01077">
    <property type="entry name" value="RimP"/>
    <property type="match status" value="1"/>
</dbReference>
<dbReference type="InterPro" id="IPR003728">
    <property type="entry name" value="Ribosome_maturation_RimP"/>
</dbReference>
<dbReference type="InterPro" id="IPR028998">
    <property type="entry name" value="RimP_C"/>
</dbReference>
<dbReference type="InterPro" id="IPR036847">
    <property type="entry name" value="RimP_C_sf"/>
</dbReference>
<dbReference type="InterPro" id="IPR028989">
    <property type="entry name" value="RimP_N"/>
</dbReference>
<dbReference type="InterPro" id="IPR035956">
    <property type="entry name" value="RimP_N_sf"/>
</dbReference>
<dbReference type="NCBIfam" id="NF000932">
    <property type="entry name" value="PRK00092.2-5"/>
    <property type="match status" value="1"/>
</dbReference>
<dbReference type="PANTHER" id="PTHR33867">
    <property type="entry name" value="RIBOSOME MATURATION FACTOR RIMP"/>
    <property type="match status" value="1"/>
</dbReference>
<dbReference type="PANTHER" id="PTHR33867:SF1">
    <property type="entry name" value="RIBOSOME MATURATION FACTOR RIMP"/>
    <property type="match status" value="1"/>
</dbReference>
<dbReference type="Pfam" id="PF17384">
    <property type="entry name" value="DUF150_C"/>
    <property type="match status" value="1"/>
</dbReference>
<dbReference type="Pfam" id="PF02576">
    <property type="entry name" value="RimP_N"/>
    <property type="match status" value="1"/>
</dbReference>
<dbReference type="SUPFAM" id="SSF74942">
    <property type="entry name" value="YhbC-like, C-terminal domain"/>
    <property type="match status" value="1"/>
</dbReference>
<dbReference type="SUPFAM" id="SSF75420">
    <property type="entry name" value="YhbC-like, N-terminal domain"/>
    <property type="match status" value="1"/>
</dbReference>
<reference key="1">
    <citation type="journal article" date="2006" name="Proc. Natl. Acad. Sci. U.S.A.">
        <title>The partitioned Rhizobium etli genome: genetic and metabolic redundancy in seven interacting replicons.</title>
        <authorList>
            <person name="Gonzalez V."/>
            <person name="Santamaria R.I."/>
            <person name="Bustos P."/>
            <person name="Hernandez-Gonzalez I."/>
            <person name="Medrano-Soto A."/>
            <person name="Moreno-Hagelsieb G."/>
            <person name="Janga S.C."/>
            <person name="Ramirez M.A."/>
            <person name="Jimenez-Jacinto V."/>
            <person name="Collado-Vides J."/>
            <person name="Davila G."/>
        </authorList>
    </citation>
    <scope>NUCLEOTIDE SEQUENCE [LARGE SCALE GENOMIC DNA]</scope>
    <source>
        <strain>ATCC 51251 / DSM 11541 / JCM 21823 / NBRC 15573 / CFN 42</strain>
    </source>
</reference>
<name>RIMP_RHIEC</name>
<keyword id="KW-0963">Cytoplasm</keyword>
<keyword id="KW-1185">Reference proteome</keyword>
<keyword id="KW-0690">Ribosome biogenesis</keyword>
<feature type="chain" id="PRO_0000384743" description="Ribosome maturation factor RimP">
    <location>
        <begin position="1"/>
        <end position="198"/>
    </location>
</feature>
<gene>
    <name evidence="1" type="primary">rimP</name>
    <name type="ordered locus">RHE_CH00119</name>
</gene>
<sequence length="198" mass="22246">MTNADNELEPRLITETGLDQRLADIIEPVLVGMGFRLIRVRMLNQNGATMQVMAERNDGTMTVQDCEEVSMAISPVLDVEDPIDKEYHLEVSSPGIDRPMVRKSDFVRWQGHLVKCETSIMIGNRKRFRGKIVEADADGFTLERDQVAYGEEQKVIIPFTALSDAKLILTDDLIRDALRADKLAKAQAANQNEADDQE</sequence>
<proteinExistence type="inferred from homology"/>
<comment type="function">
    <text evidence="1">Required for maturation of 30S ribosomal subunits.</text>
</comment>
<comment type="subcellular location">
    <subcellularLocation>
        <location evidence="1">Cytoplasm</location>
    </subcellularLocation>
</comment>
<comment type="similarity">
    <text evidence="1">Belongs to the RimP family.</text>
</comment>
<accession>Q2KDZ2</accession>
<evidence type="ECO:0000255" key="1">
    <source>
        <dbReference type="HAMAP-Rule" id="MF_01077"/>
    </source>
</evidence>